<evidence type="ECO:0000255" key="1">
    <source>
        <dbReference type="HAMAP-Rule" id="MF_01694"/>
    </source>
</evidence>
<evidence type="ECO:0000255" key="2">
    <source>
        <dbReference type="PROSITE-ProRule" id="PRU01266"/>
    </source>
</evidence>
<organism>
    <name type="scientific">Staphylococcus epidermidis (strain ATCC 12228 / FDA PCI 1200)</name>
    <dbReference type="NCBI Taxonomy" id="176280"/>
    <lineage>
        <taxon>Bacteria</taxon>
        <taxon>Bacillati</taxon>
        <taxon>Bacillota</taxon>
        <taxon>Bacilli</taxon>
        <taxon>Bacillales</taxon>
        <taxon>Staphylococcaceae</taxon>
        <taxon>Staphylococcus</taxon>
    </lineage>
</organism>
<protein>
    <recommendedName>
        <fullName evidence="1">Biotin synthase</fullName>
        <ecNumber evidence="1">2.8.1.6</ecNumber>
    </recommendedName>
</protein>
<dbReference type="EC" id="2.8.1.6" evidence="1"/>
<dbReference type="EMBL" id="AE015929">
    <property type="protein sequence ID" value="AAO03831.1"/>
    <property type="molecule type" value="Genomic_DNA"/>
</dbReference>
<dbReference type="RefSeq" id="NP_763789.1">
    <property type="nucleotide sequence ID" value="NC_004461.1"/>
</dbReference>
<dbReference type="SMR" id="Q8CQB3"/>
<dbReference type="KEGG" id="sep:SE_0234"/>
<dbReference type="PATRIC" id="fig|176280.10.peg.212"/>
<dbReference type="eggNOG" id="COG0502">
    <property type="taxonomic scope" value="Bacteria"/>
</dbReference>
<dbReference type="HOGENOM" id="CLU_033172_2_1_9"/>
<dbReference type="OrthoDB" id="9786826at2"/>
<dbReference type="UniPathway" id="UPA00078">
    <property type="reaction ID" value="UER00162"/>
</dbReference>
<dbReference type="Proteomes" id="UP000001411">
    <property type="component" value="Chromosome"/>
</dbReference>
<dbReference type="GO" id="GO:0051537">
    <property type="term" value="F:2 iron, 2 sulfur cluster binding"/>
    <property type="evidence" value="ECO:0007669"/>
    <property type="project" value="UniProtKB-KW"/>
</dbReference>
<dbReference type="GO" id="GO:0051539">
    <property type="term" value="F:4 iron, 4 sulfur cluster binding"/>
    <property type="evidence" value="ECO:0007669"/>
    <property type="project" value="UniProtKB-KW"/>
</dbReference>
<dbReference type="GO" id="GO:0004076">
    <property type="term" value="F:biotin synthase activity"/>
    <property type="evidence" value="ECO:0007669"/>
    <property type="project" value="UniProtKB-UniRule"/>
</dbReference>
<dbReference type="GO" id="GO:0005506">
    <property type="term" value="F:iron ion binding"/>
    <property type="evidence" value="ECO:0007669"/>
    <property type="project" value="UniProtKB-UniRule"/>
</dbReference>
<dbReference type="GO" id="GO:0009102">
    <property type="term" value="P:biotin biosynthetic process"/>
    <property type="evidence" value="ECO:0007669"/>
    <property type="project" value="UniProtKB-UniRule"/>
</dbReference>
<dbReference type="CDD" id="cd01335">
    <property type="entry name" value="Radical_SAM"/>
    <property type="match status" value="1"/>
</dbReference>
<dbReference type="FunFam" id="3.20.20.70:FF:000026">
    <property type="entry name" value="Biotin synthase"/>
    <property type="match status" value="1"/>
</dbReference>
<dbReference type="Gene3D" id="3.20.20.70">
    <property type="entry name" value="Aldolase class I"/>
    <property type="match status" value="1"/>
</dbReference>
<dbReference type="HAMAP" id="MF_01694">
    <property type="entry name" value="BioB"/>
    <property type="match status" value="1"/>
</dbReference>
<dbReference type="InterPro" id="IPR013785">
    <property type="entry name" value="Aldolase_TIM"/>
</dbReference>
<dbReference type="InterPro" id="IPR010722">
    <property type="entry name" value="BATS_dom"/>
</dbReference>
<dbReference type="InterPro" id="IPR002684">
    <property type="entry name" value="Biotin_synth/BioAB"/>
</dbReference>
<dbReference type="InterPro" id="IPR024177">
    <property type="entry name" value="Biotin_synthase"/>
</dbReference>
<dbReference type="InterPro" id="IPR006638">
    <property type="entry name" value="Elp3/MiaA/NifB-like_rSAM"/>
</dbReference>
<dbReference type="InterPro" id="IPR007197">
    <property type="entry name" value="rSAM"/>
</dbReference>
<dbReference type="NCBIfam" id="TIGR00433">
    <property type="entry name" value="bioB"/>
    <property type="match status" value="1"/>
</dbReference>
<dbReference type="PANTHER" id="PTHR22976">
    <property type="entry name" value="BIOTIN SYNTHASE"/>
    <property type="match status" value="1"/>
</dbReference>
<dbReference type="PANTHER" id="PTHR22976:SF2">
    <property type="entry name" value="BIOTIN SYNTHASE, MITOCHONDRIAL"/>
    <property type="match status" value="1"/>
</dbReference>
<dbReference type="Pfam" id="PF06968">
    <property type="entry name" value="BATS"/>
    <property type="match status" value="1"/>
</dbReference>
<dbReference type="Pfam" id="PF04055">
    <property type="entry name" value="Radical_SAM"/>
    <property type="match status" value="1"/>
</dbReference>
<dbReference type="PIRSF" id="PIRSF001619">
    <property type="entry name" value="Biotin_synth"/>
    <property type="match status" value="1"/>
</dbReference>
<dbReference type="SFLD" id="SFLDG01060">
    <property type="entry name" value="BATS_domain_containing"/>
    <property type="match status" value="1"/>
</dbReference>
<dbReference type="SFLD" id="SFLDG01278">
    <property type="entry name" value="biotin_synthase_like"/>
    <property type="match status" value="1"/>
</dbReference>
<dbReference type="SMART" id="SM00876">
    <property type="entry name" value="BATS"/>
    <property type="match status" value="1"/>
</dbReference>
<dbReference type="SMART" id="SM00729">
    <property type="entry name" value="Elp3"/>
    <property type="match status" value="1"/>
</dbReference>
<dbReference type="SUPFAM" id="SSF102114">
    <property type="entry name" value="Radical SAM enzymes"/>
    <property type="match status" value="1"/>
</dbReference>
<dbReference type="PROSITE" id="PS51918">
    <property type="entry name" value="RADICAL_SAM"/>
    <property type="match status" value="1"/>
</dbReference>
<keyword id="KW-0001">2Fe-2S</keyword>
<keyword id="KW-0004">4Fe-4S</keyword>
<keyword id="KW-0093">Biotin biosynthesis</keyword>
<keyword id="KW-0408">Iron</keyword>
<keyword id="KW-0411">Iron-sulfur</keyword>
<keyword id="KW-0479">Metal-binding</keyword>
<keyword id="KW-0949">S-adenosyl-L-methionine</keyword>
<keyword id="KW-0808">Transferase</keyword>
<accession>Q8CQB3</accession>
<name>BIOB_STAES</name>
<sequence length="313" mass="35121">MLNREPLTKEEALTIFESSELDTFDLLNEAYTVRKHYYGKKVKLNMILNAKSGICAEDCGYCGQSVKMKEKQRYALVEQDQIKEGAQVATENQIGTYCIVMSGRGPSNREVDHICETVEDIKKIHPQLKICACLGLTKEEQAKKLKAAGVDRYNHNLNTSERYHDEVVTTHTYEDRVNTVEMMKDNNISPCSGVICGMGESNEDIIDMAFALRAIDADSIPINFLHPIKGTKFGGLDLLSPMKCLRIIAMFRLINPTKEIRIAGGREVNLRSLQPLALKAANSIFVGDYLITGGQPNEEDYRMIEDLGFEIDS</sequence>
<proteinExistence type="inferred from homology"/>
<feature type="chain" id="PRO_0000381658" description="Biotin synthase">
    <location>
        <begin position="1"/>
        <end position="313"/>
    </location>
</feature>
<feature type="domain" description="Radical SAM core" evidence="2">
    <location>
        <begin position="37"/>
        <end position="263"/>
    </location>
</feature>
<feature type="binding site" evidence="1">
    <location>
        <position position="55"/>
    </location>
    <ligand>
        <name>[4Fe-4S] cluster</name>
        <dbReference type="ChEBI" id="CHEBI:49883"/>
        <note>4Fe-4S-S-AdoMet</note>
    </ligand>
</feature>
<feature type="binding site" evidence="1">
    <location>
        <position position="59"/>
    </location>
    <ligand>
        <name>[4Fe-4S] cluster</name>
        <dbReference type="ChEBI" id="CHEBI:49883"/>
        <note>4Fe-4S-S-AdoMet</note>
    </ligand>
</feature>
<feature type="binding site" evidence="1">
    <location>
        <position position="62"/>
    </location>
    <ligand>
        <name>[4Fe-4S] cluster</name>
        <dbReference type="ChEBI" id="CHEBI:49883"/>
        <note>4Fe-4S-S-AdoMet</note>
    </ligand>
</feature>
<feature type="binding site" evidence="1">
    <location>
        <position position="98"/>
    </location>
    <ligand>
        <name>[2Fe-2S] cluster</name>
        <dbReference type="ChEBI" id="CHEBI:190135"/>
    </ligand>
</feature>
<feature type="binding site" evidence="1">
    <location>
        <position position="131"/>
    </location>
    <ligand>
        <name>[2Fe-2S] cluster</name>
        <dbReference type="ChEBI" id="CHEBI:190135"/>
    </ligand>
</feature>
<feature type="binding site" evidence="1">
    <location>
        <position position="191"/>
    </location>
    <ligand>
        <name>[2Fe-2S] cluster</name>
        <dbReference type="ChEBI" id="CHEBI:190135"/>
    </ligand>
</feature>
<feature type="binding site" evidence="1">
    <location>
        <position position="261"/>
    </location>
    <ligand>
        <name>[2Fe-2S] cluster</name>
        <dbReference type="ChEBI" id="CHEBI:190135"/>
    </ligand>
</feature>
<reference key="1">
    <citation type="journal article" date="2003" name="Mol. Microbiol.">
        <title>Genome-based analysis of virulence genes in a non-biofilm-forming Staphylococcus epidermidis strain (ATCC 12228).</title>
        <authorList>
            <person name="Zhang Y.-Q."/>
            <person name="Ren S.-X."/>
            <person name="Li H.-L."/>
            <person name="Wang Y.-X."/>
            <person name="Fu G."/>
            <person name="Yang J."/>
            <person name="Qin Z.-Q."/>
            <person name="Miao Y.-G."/>
            <person name="Wang W.-Y."/>
            <person name="Chen R.-S."/>
            <person name="Shen Y."/>
            <person name="Chen Z."/>
            <person name="Yuan Z.-H."/>
            <person name="Zhao G.-P."/>
            <person name="Qu D."/>
            <person name="Danchin A."/>
            <person name="Wen Y.-M."/>
        </authorList>
    </citation>
    <scope>NUCLEOTIDE SEQUENCE [LARGE SCALE GENOMIC DNA]</scope>
    <source>
        <strain>ATCC 12228 / FDA PCI 1200</strain>
    </source>
</reference>
<gene>
    <name evidence="1" type="primary">bioB</name>
    <name type="ordered locus">SE_0234</name>
</gene>
<comment type="function">
    <text evidence="1">Catalyzes the conversion of dethiobiotin (DTB) to biotin by the insertion of a sulfur atom into dethiobiotin via a radical-based mechanism.</text>
</comment>
<comment type="catalytic activity">
    <reaction evidence="1">
        <text>(4R,5S)-dethiobiotin + (sulfur carrier)-SH + 2 reduced [2Fe-2S]-[ferredoxin] + 2 S-adenosyl-L-methionine = (sulfur carrier)-H + biotin + 2 5'-deoxyadenosine + 2 L-methionine + 2 oxidized [2Fe-2S]-[ferredoxin]</text>
        <dbReference type="Rhea" id="RHEA:22060"/>
        <dbReference type="Rhea" id="RHEA-COMP:10000"/>
        <dbReference type="Rhea" id="RHEA-COMP:10001"/>
        <dbReference type="Rhea" id="RHEA-COMP:14737"/>
        <dbReference type="Rhea" id="RHEA-COMP:14739"/>
        <dbReference type="ChEBI" id="CHEBI:17319"/>
        <dbReference type="ChEBI" id="CHEBI:29917"/>
        <dbReference type="ChEBI" id="CHEBI:33737"/>
        <dbReference type="ChEBI" id="CHEBI:33738"/>
        <dbReference type="ChEBI" id="CHEBI:57586"/>
        <dbReference type="ChEBI" id="CHEBI:57844"/>
        <dbReference type="ChEBI" id="CHEBI:59789"/>
        <dbReference type="ChEBI" id="CHEBI:64428"/>
        <dbReference type="ChEBI" id="CHEBI:149473"/>
        <dbReference type="EC" id="2.8.1.6"/>
    </reaction>
</comment>
<comment type="cofactor">
    <cofactor evidence="1">
        <name>[4Fe-4S] cluster</name>
        <dbReference type="ChEBI" id="CHEBI:49883"/>
    </cofactor>
    <text evidence="1">Binds 1 [4Fe-4S] cluster. The cluster is coordinated with 3 cysteines and an exchangeable S-adenosyl-L-methionine.</text>
</comment>
<comment type="cofactor">
    <cofactor evidence="1">
        <name>[2Fe-2S] cluster</name>
        <dbReference type="ChEBI" id="CHEBI:190135"/>
    </cofactor>
    <text evidence="1">Binds 1 [2Fe-2S] cluster. The cluster is coordinated with 3 cysteines and 1 arginine.</text>
</comment>
<comment type="pathway">
    <text evidence="1">Cofactor biosynthesis; biotin biosynthesis; biotin from 7,8-diaminononanoate: step 2/2.</text>
</comment>
<comment type="subunit">
    <text evidence="1">Homodimer.</text>
</comment>
<comment type="similarity">
    <text evidence="1">Belongs to the radical SAM superfamily. Biotin synthase family.</text>
</comment>